<gene>
    <name type="primary">Erp29</name>
</gene>
<accession>P57759</accession>
<accession>Q3THW3</accession>
<accession>Q9CQ42</accession>
<reference key="1">
    <citation type="journal article" date="2005" name="Science">
        <title>The transcriptional landscape of the mammalian genome.</title>
        <authorList>
            <person name="Carninci P."/>
            <person name="Kasukawa T."/>
            <person name="Katayama S."/>
            <person name="Gough J."/>
            <person name="Frith M.C."/>
            <person name="Maeda N."/>
            <person name="Oyama R."/>
            <person name="Ravasi T."/>
            <person name="Lenhard B."/>
            <person name="Wells C."/>
            <person name="Kodzius R."/>
            <person name="Shimokawa K."/>
            <person name="Bajic V.B."/>
            <person name="Brenner S.E."/>
            <person name="Batalov S."/>
            <person name="Forrest A.R."/>
            <person name="Zavolan M."/>
            <person name="Davis M.J."/>
            <person name="Wilming L.G."/>
            <person name="Aidinis V."/>
            <person name="Allen J.E."/>
            <person name="Ambesi-Impiombato A."/>
            <person name="Apweiler R."/>
            <person name="Aturaliya R.N."/>
            <person name="Bailey T.L."/>
            <person name="Bansal M."/>
            <person name="Baxter L."/>
            <person name="Beisel K.W."/>
            <person name="Bersano T."/>
            <person name="Bono H."/>
            <person name="Chalk A.M."/>
            <person name="Chiu K.P."/>
            <person name="Choudhary V."/>
            <person name="Christoffels A."/>
            <person name="Clutterbuck D.R."/>
            <person name="Crowe M.L."/>
            <person name="Dalla E."/>
            <person name="Dalrymple B.P."/>
            <person name="de Bono B."/>
            <person name="Della Gatta G."/>
            <person name="di Bernardo D."/>
            <person name="Down T."/>
            <person name="Engstrom P."/>
            <person name="Fagiolini M."/>
            <person name="Faulkner G."/>
            <person name="Fletcher C.F."/>
            <person name="Fukushima T."/>
            <person name="Furuno M."/>
            <person name="Futaki S."/>
            <person name="Gariboldi M."/>
            <person name="Georgii-Hemming P."/>
            <person name="Gingeras T.R."/>
            <person name="Gojobori T."/>
            <person name="Green R.E."/>
            <person name="Gustincich S."/>
            <person name="Harbers M."/>
            <person name="Hayashi Y."/>
            <person name="Hensch T.K."/>
            <person name="Hirokawa N."/>
            <person name="Hill D."/>
            <person name="Huminiecki L."/>
            <person name="Iacono M."/>
            <person name="Ikeo K."/>
            <person name="Iwama A."/>
            <person name="Ishikawa T."/>
            <person name="Jakt M."/>
            <person name="Kanapin A."/>
            <person name="Katoh M."/>
            <person name="Kawasawa Y."/>
            <person name="Kelso J."/>
            <person name="Kitamura H."/>
            <person name="Kitano H."/>
            <person name="Kollias G."/>
            <person name="Krishnan S.P."/>
            <person name="Kruger A."/>
            <person name="Kummerfeld S.K."/>
            <person name="Kurochkin I.V."/>
            <person name="Lareau L.F."/>
            <person name="Lazarevic D."/>
            <person name="Lipovich L."/>
            <person name="Liu J."/>
            <person name="Liuni S."/>
            <person name="McWilliam S."/>
            <person name="Madan Babu M."/>
            <person name="Madera M."/>
            <person name="Marchionni L."/>
            <person name="Matsuda H."/>
            <person name="Matsuzawa S."/>
            <person name="Miki H."/>
            <person name="Mignone F."/>
            <person name="Miyake S."/>
            <person name="Morris K."/>
            <person name="Mottagui-Tabar S."/>
            <person name="Mulder N."/>
            <person name="Nakano N."/>
            <person name="Nakauchi H."/>
            <person name="Ng P."/>
            <person name="Nilsson R."/>
            <person name="Nishiguchi S."/>
            <person name="Nishikawa S."/>
            <person name="Nori F."/>
            <person name="Ohara O."/>
            <person name="Okazaki Y."/>
            <person name="Orlando V."/>
            <person name="Pang K.C."/>
            <person name="Pavan W.J."/>
            <person name="Pavesi G."/>
            <person name="Pesole G."/>
            <person name="Petrovsky N."/>
            <person name="Piazza S."/>
            <person name="Reed J."/>
            <person name="Reid J.F."/>
            <person name="Ring B.Z."/>
            <person name="Ringwald M."/>
            <person name="Rost B."/>
            <person name="Ruan Y."/>
            <person name="Salzberg S.L."/>
            <person name="Sandelin A."/>
            <person name="Schneider C."/>
            <person name="Schoenbach C."/>
            <person name="Sekiguchi K."/>
            <person name="Semple C.A."/>
            <person name="Seno S."/>
            <person name="Sessa L."/>
            <person name="Sheng Y."/>
            <person name="Shibata Y."/>
            <person name="Shimada H."/>
            <person name="Shimada K."/>
            <person name="Silva D."/>
            <person name="Sinclair B."/>
            <person name="Sperling S."/>
            <person name="Stupka E."/>
            <person name="Sugiura K."/>
            <person name="Sultana R."/>
            <person name="Takenaka Y."/>
            <person name="Taki K."/>
            <person name="Tammoja K."/>
            <person name="Tan S.L."/>
            <person name="Tang S."/>
            <person name="Taylor M.S."/>
            <person name="Tegner J."/>
            <person name="Teichmann S.A."/>
            <person name="Ueda H.R."/>
            <person name="van Nimwegen E."/>
            <person name="Verardo R."/>
            <person name="Wei C.L."/>
            <person name="Yagi K."/>
            <person name="Yamanishi H."/>
            <person name="Zabarovsky E."/>
            <person name="Zhu S."/>
            <person name="Zimmer A."/>
            <person name="Hide W."/>
            <person name="Bult C."/>
            <person name="Grimmond S.M."/>
            <person name="Teasdale R.D."/>
            <person name="Liu E.T."/>
            <person name="Brusic V."/>
            <person name="Quackenbush J."/>
            <person name="Wahlestedt C."/>
            <person name="Mattick J.S."/>
            <person name="Hume D.A."/>
            <person name="Kai C."/>
            <person name="Sasaki D."/>
            <person name="Tomaru Y."/>
            <person name="Fukuda S."/>
            <person name="Kanamori-Katayama M."/>
            <person name="Suzuki M."/>
            <person name="Aoki J."/>
            <person name="Arakawa T."/>
            <person name="Iida J."/>
            <person name="Imamura K."/>
            <person name="Itoh M."/>
            <person name="Kato T."/>
            <person name="Kawaji H."/>
            <person name="Kawagashira N."/>
            <person name="Kawashima T."/>
            <person name="Kojima M."/>
            <person name="Kondo S."/>
            <person name="Konno H."/>
            <person name="Nakano K."/>
            <person name="Ninomiya N."/>
            <person name="Nishio T."/>
            <person name="Okada M."/>
            <person name="Plessy C."/>
            <person name="Shibata K."/>
            <person name="Shiraki T."/>
            <person name="Suzuki S."/>
            <person name="Tagami M."/>
            <person name="Waki K."/>
            <person name="Watahiki A."/>
            <person name="Okamura-Oho Y."/>
            <person name="Suzuki H."/>
            <person name="Kawai J."/>
            <person name="Hayashizaki Y."/>
        </authorList>
    </citation>
    <scope>NUCLEOTIDE SEQUENCE [LARGE SCALE MRNA]</scope>
    <source>
        <strain>BALB/cJ</strain>
        <strain>C57BL/6J</strain>
        <strain>NOD</strain>
        <tissue>Lung</tissue>
        <tissue>Tongue</tissue>
    </source>
</reference>
<reference key="2">
    <citation type="journal article" date="2004" name="Genome Res.">
        <title>The status, quality, and expansion of the NIH full-length cDNA project: the Mammalian Gene Collection (MGC).</title>
        <authorList>
            <consortium name="The MGC Project Team"/>
        </authorList>
    </citation>
    <scope>NUCLEOTIDE SEQUENCE [LARGE SCALE MRNA]</scope>
    <source>
        <tissue>Eye</tissue>
    </source>
</reference>
<reference key="3">
    <citation type="submission" date="2007-07" db="UniProtKB">
        <authorList>
            <person name="Lubec G."/>
            <person name="Klug S."/>
            <person name="Yang J.W."/>
            <person name="Zigmond M."/>
        </authorList>
    </citation>
    <scope>PROTEIN SEQUENCE OF 115-124</scope>
    <scope>IDENTIFICATION BY MASS SPECTROMETRY</scope>
    <source>
        <tissue>Brain</tissue>
        <tissue>Hippocampus</tissue>
    </source>
</reference>
<reference key="4">
    <citation type="journal article" date="2002" name="Mol. Biol. Cell">
        <title>A subset of chaperones and folding enzymes form multiprotein complexes in endoplasmic reticulum to bind nascent proteins.</title>
        <authorList>
            <person name="Meunier L."/>
            <person name="Usherwood Y.-K."/>
            <person name="Chung K.T."/>
            <person name="Hendershot L.M."/>
        </authorList>
    </citation>
    <scope>COMPONENT OF A CHAPERONE COMPLEX</scope>
</reference>
<reference key="5">
    <citation type="journal article" date="2010" name="Cell">
        <title>A tissue-specific atlas of mouse protein phosphorylation and expression.</title>
        <authorList>
            <person name="Huttlin E.L."/>
            <person name="Jedrychowski M.P."/>
            <person name="Elias J.E."/>
            <person name="Goswami T."/>
            <person name="Rad R."/>
            <person name="Beausoleil S.A."/>
            <person name="Villen J."/>
            <person name="Haas W."/>
            <person name="Sowa M.E."/>
            <person name="Gygi S.P."/>
        </authorList>
    </citation>
    <scope>IDENTIFICATION BY MASS SPECTROMETRY [LARGE SCALE ANALYSIS]</scope>
    <source>
        <tissue>Brain</tissue>
        <tissue>Brown adipose tissue</tissue>
        <tissue>Heart</tissue>
        <tissue>Kidney</tissue>
        <tissue>Liver</tissue>
        <tissue>Lung</tissue>
        <tissue>Pancreas</tissue>
        <tissue>Spleen</tissue>
        <tissue>Testis</tissue>
    </source>
</reference>
<keyword id="KW-0903">Direct protein sequencing</keyword>
<keyword id="KW-0256">Endoplasmic reticulum</keyword>
<keyword id="KW-0597">Phosphoprotein</keyword>
<keyword id="KW-1185">Reference proteome</keyword>
<keyword id="KW-0732">Signal</keyword>
<protein>
    <recommendedName>
        <fullName>Endoplasmic reticulum resident protein 29</fullName>
        <shortName>ERp29</shortName>
    </recommendedName>
</protein>
<sequence length="262" mass="28823">MAAAAGVSGAASLSPLLSVLLGLLLLFAPHGGSGLHTKGALPLDTVTFYKVIPKSKFVLVKFDTQYPYGEKQDEFKRLAENSASSEELLVAEVGISDYGDKLNMELSEKYKLDKESYPVFYLFRDGDLENPVLYNGAVKVGAIQRWLKGQGVYLGMPGCLPAYDALAGEFIKASSIEARQAILKQGQDGLLSVKETEKKWASQYLKIMGKILDQGEDFPASEMARIGKLIENKMSDSKKEELQKSLNILTAFRKKEAEKEEL</sequence>
<comment type="function">
    <text>Does not seem to be a disulfide isomerase. Plays an important role in the processing of secretory proteins within the endoplasmic reticulum (ER), possibly by participating in the folding of proteins in the ER.</text>
</comment>
<comment type="subunit">
    <text evidence="1">Homodimer. Part of a large chaperone multiprotein complex comprising CABP1, DNAJB11, HSP90B1, HSPA5, HYOU, PDIA2, PDIA4, PPIB, SDF2L1, UGGT1 and very small amounts of ERP29, but not, or at very low levels, CALR nor CANX (By similarity).</text>
</comment>
<comment type="subcellular location">
    <subcellularLocation>
        <location evidence="3">Endoplasmic reticulum lumen</location>
    </subcellularLocation>
    <subcellularLocation>
        <location evidence="1">Melanosome</location>
    </subcellularLocation>
</comment>
<proteinExistence type="evidence at protein level"/>
<organism>
    <name type="scientific">Mus musculus</name>
    <name type="common">Mouse</name>
    <dbReference type="NCBI Taxonomy" id="10090"/>
    <lineage>
        <taxon>Eukaryota</taxon>
        <taxon>Metazoa</taxon>
        <taxon>Chordata</taxon>
        <taxon>Craniata</taxon>
        <taxon>Vertebrata</taxon>
        <taxon>Euteleostomi</taxon>
        <taxon>Mammalia</taxon>
        <taxon>Eutheria</taxon>
        <taxon>Euarchontoglires</taxon>
        <taxon>Glires</taxon>
        <taxon>Rodentia</taxon>
        <taxon>Myomorpha</taxon>
        <taxon>Muroidea</taxon>
        <taxon>Muridae</taxon>
        <taxon>Murinae</taxon>
        <taxon>Mus</taxon>
        <taxon>Mus</taxon>
    </lineage>
</organism>
<feature type="signal peptide" evidence="1">
    <location>
        <begin position="1"/>
        <end position="34"/>
    </location>
</feature>
<feature type="chain" id="PRO_0000021198" description="Endoplasmic reticulum resident protein 29">
    <location>
        <begin position="35"/>
        <end position="262"/>
    </location>
</feature>
<feature type="short sequence motif" description="Prevents secretion from ER" evidence="3">
    <location>
        <begin position="259"/>
        <end position="262"/>
    </location>
</feature>
<feature type="modified residue" description="Phosphotyrosine; by PKDCC" evidence="2">
    <location>
        <position position="66"/>
    </location>
</feature>
<feature type="modified residue" description="Phosphotyrosine; by PKDCC" evidence="2">
    <location>
        <position position="68"/>
    </location>
</feature>
<dbReference type="EMBL" id="AK004795">
    <property type="protein sequence ID" value="BAB23570.1"/>
    <property type="molecule type" value="mRNA"/>
</dbReference>
<dbReference type="EMBL" id="AK009881">
    <property type="protein sequence ID" value="BAB26559.1"/>
    <property type="molecule type" value="mRNA"/>
</dbReference>
<dbReference type="EMBL" id="AK154539">
    <property type="protein sequence ID" value="BAE32664.1"/>
    <property type="molecule type" value="mRNA"/>
</dbReference>
<dbReference type="EMBL" id="AK168112">
    <property type="protein sequence ID" value="BAE40083.1"/>
    <property type="molecule type" value="mRNA"/>
</dbReference>
<dbReference type="EMBL" id="BC017125">
    <property type="protein sequence ID" value="AAH17125.1"/>
    <property type="molecule type" value="mRNA"/>
</dbReference>
<dbReference type="CCDS" id="CCDS19634.1"/>
<dbReference type="RefSeq" id="NP_080405.1">
    <property type="nucleotide sequence ID" value="NM_026129.2"/>
</dbReference>
<dbReference type="SMR" id="P57759"/>
<dbReference type="BioGRID" id="212160">
    <property type="interactions" value="1"/>
</dbReference>
<dbReference type="FunCoup" id="P57759">
    <property type="interactions" value="1443"/>
</dbReference>
<dbReference type="IntAct" id="P57759">
    <property type="interactions" value="1"/>
</dbReference>
<dbReference type="STRING" id="10090.ENSMUSP00000117347"/>
<dbReference type="GlyGen" id="P57759">
    <property type="glycosylation" value="1 site, 1 O-linked glycan (1 site)"/>
</dbReference>
<dbReference type="iPTMnet" id="P57759"/>
<dbReference type="PhosphoSitePlus" id="P57759"/>
<dbReference type="SwissPalm" id="P57759"/>
<dbReference type="REPRODUCTION-2DPAGE" id="P57759"/>
<dbReference type="jPOST" id="P57759"/>
<dbReference type="PaxDb" id="10090-ENSMUSP00000117347"/>
<dbReference type="PeptideAtlas" id="P57759"/>
<dbReference type="ProteomicsDB" id="275539"/>
<dbReference type="Pumba" id="P57759"/>
<dbReference type="Antibodypedia" id="18632">
    <property type="antibodies" value="333 antibodies from 36 providers"/>
</dbReference>
<dbReference type="DNASU" id="67397"/>
<dbReference type="Ensembl" id="ENSMUST00000130451.2">
    <property type="protein sequence ID" value="ENSMUSP00000117347.2"/>
    <property type="gene ID" value="ENSMUSG00000029616.10"/>
</dbReference>
<dbReference type="GeneID" id="67397"/>
<dbReference type="KEGG" id="mmu:67397"/>
<dbReference type="UCSC" id="uc008zjf.1">
    <property type="organism name" value="mouse"/>
</dbReference>
<dbReference type="AGR" id="MGI:1914647"/>
<dbReference type="CTD" id="10961"/>
<dbReference type="MGI" id="MGI:1914647">
    <property type="gene designation" value="Erp29"/>
</dbReference>
<dbReference type="VEuPathDB" id="HostDB:ENSMUSG00000029616"/>
<dbReference type="eggNOG" id="ENOG502QSHC">
    <property type="taxonomic scope" value="Eukaryota"/>
</dbReference>
<dbReference type="GeneTree" id="ENSGT00390000018566"/>
<dbReference type="HOGENOM" id="CLU_061309_1_0_1"/>
<dbReference type="InParanoid" id="P57759"/>
<dbReference type="OMA" id="FPYGDKH"/>
<dbReference type="OrthoDB" id="417262at2759"/>
<dbReference type="PhylomeDB" id="P57759"/>
<dbReference type="TreeFam" id="TF324701"/>
<dbReference type="BioGRID-ORCS" id="67397">
    <property type="hits" value="4 hits in 79 CRISPR screens"/>
</dbReference>
<dbReference type="ChiTaRS" id="Erp29">
    <property type="organism name" value="mouse"/>
</dbReference>
<dbReference type="PRO" id="PR:P57759"/>
<dbReference type="Proteomes" id="UP000000589">
    <property type="component" value="Chromosome 5"/>
</dbReference>
<dbReference type="RNAct" id="P57759">
    <property type="molecule type" value="protein"/>
</dbReference>
<dbReference type="Bgee" id="ENSMUSG00000029616">
    <property type="expression patterns" value="Expressed in dorsal pancreas and 270 other cell types or tissues"/>
</dbReference>
<dbReference type="ExpressionAtlas" id="P57759">
    <property type="expression patterns" value="baseline and differential"/>
</dbReference>
<dbReference type="GO" id="GO:0009986">
    <property type="term" value="C:cell surface"/>
    <property type="evidence" value="ECO:0000314"/>
    <property type="project" value="MGI"/>
</dbReference>
<dbReference type="GO" id="GO:0005783">
    <property type="term" value="C:endoplasmic reticulum"/>
    <property type="evidence" value="ECO:0000266"/>
    <property type="project" value="MGI"/>
</dbReference>
<dbReference type="GO" id="GO:0005788">
    <property type="term" value="C:endoplasmic reticulum lumen"/>
    <property type="evidence" value="ECO:0007669"/>
    <property type="project" value="UniProtKB-SubCell"/>
</dbReference>
<dbReference type="GO" id="GO:0042470">
    <property type="term" value="C:melanosome"/>
    <property type="evidence" value="ECO:0007669"/>
    <property type="project" value="UniProtKB-SubCell"/>
</dbReference>
<dbReference type="GO" id="GO:0005790">
    <property type="term" value="C:smooth endoplasmic reticulum"/>
    <property type="evidence" value="ECO:0007669"/>
    <property type="project" value="Ensembl"/>
</dbReference>
<dbReference type="GO" id="GO:0042803">
    <property type="term" value="F:protein homodimerization activity"/>
    <property type="evidence" value="ECO:0007669"/>
    <property type="project" value="Ensembl"/>
</dbReference>
<dbReference type="GO" id="GO:0051087">
    <property type="term" value="F:protein-folding chaperone binding"/>
    <property type="evidence" value="ECO:0007669"/>
    <property type="project" value="Ensembl"/>
</dbReference>
<dbReference type="GO" id="GO:0006888">
    <property type="term" value="P:endoplasmic reticulum to Golgi vesicle-mediated transport"/>
    <property type="evidence" value="ECO:0000303"/>
    <property type="project" value="ParkinsonsUK-UCL"/>
</dbReference>
<dbReference type="GO" id="GO:0010629">
    <property type="term" value="P:negative regulation of gene expression"/>
    <property type="evidence" value="ECO:0007669"/>
    <property type="project" value="Ensembl"/>
</dbReference>
<dbReference type="GO" id="GO:0050709">
    <property type="term" value="P:negative regulation of protein secretion"/>
    <property type="evidence" value="ECO:0007669"/>
    <property type="project" value="Ensembl"/>
</dbReference>
<dbReference type="GO" id="GO:0010628">
    <property type="term" value="P:positive regulation of gene expression"/>
    <property type="evidence" value="ECO:0007669"/>
    <property type="project" value="Ensembl"/>
</dbReference>
<dbReference type="GO" id="GO:0043410">
    <property type="term" value="P:positive regulation of MAPK cascade"/>
    <property type="evidence" value="ECO:0007669"/>
    <property type="project" value="Ensembl"/>
</dbReference>
<dbReference type="GO" id="GO:0009306">
    <property type="term" value="P:protein secretion"/>
    <property type="evidence" value="ECO:0007669"/>
    <property type="project" value="InterPro"/>
</dbReference>
<dbReference type="GO" id="GO:1902235">
    <property type="term" value="P:regulation of endoplasmic reticulum stress-induced intrinsic apoptotic signaling pathway"/>
    <property type="evidence" value="ECO:0000315"/>
    <property type="project" value="ParkinsonsUK-UCL"/>
</dbReference>
<dbReference type="CDD" id="cd00238">
    <property type="entry name" value="ERp29c"/>
    <property type="match status" value="1"/>
</dbReference>
<dbReference type="CDD" id="cd03007">
    <property type="entry name" value="PDI_a_ERp29_N"/>
    <property type="match status" value="1"/>
</dbReference>
<dbReference type="FunFam" id="1.20.1150.12:FF:000001">
    <property type="entry name" value="Endoplasmic reticulum resident protein 29"/>
    <property type="match status" value="1"/>
</dbReference>
<dbReference type="FunFam" id="3.40.30.10:FF:000133">
    <property type="entry name" value="Endoplasmic reticulum resident protein 29"/>
    <property type="match status" value="1"/>
</dbReference>
<dbReference type="Gene3D" id="1.20.1150.12">
    <property type="entry name" value="Endoplasmic reticulum resident protein 29, C-terminal domain"/>
    <property type="match status" value="1"/>
</dbReference>
<dbReference type="Gene3D" id="3.40.30.10">
    <property type="entry name" value="Glutaredoxin"/>
    <property type="match status" value="1"/>
</dbReference>
<dbReference type="InterPro" id="IPR016855">
    <property type="entry name" value="ERp29"/>
</dbReference>
<dbReference type="InterPro" id="IPR011679">
    <property type="entry name" value="ERp29_C"/>
</dbReference>
<dbReference type="InterPro" id="IPR036356">
    <property type="entry name" value="ERp29_C_sf"/>
</dbReference>
<dbReference type="InterPro" id="IPR012883">
    <property type="entry name" value="ERp29_N"/>
</dbReference>
<dbReference type="InterPro" id="IPR036249">
    <property type="entry name" value="Thioredoxin-like_sf"/>
</dbReference>
<dbReference type="PANTHER" id="PTHR12211">
    <property type="entry name" value="ENDOPLASMIC RETICULUM PROTEIN ERP29"/>
    <property type="match status" value="1"/>
</dbReference>
<dbReference type="PANTHER" id="PTHR12211:SF0">
    <property type="entry name" value="ENDOPLASMIC RETICULUM RESIDENT PROTEIN 29"/>
    <property type="match status" value="1"/>
</dbReference>
<dbReference type="Pfam" id="PF07749">
    <property type="entry name" value="ERp29"/>
    <property type="match status" value="1"/>
</dbReference>
<dbReference type="Pfam" id="PF07912">
    <property type="entry name" value="ERp29_N"/>
    <property type="match status" value="1"/>
</dbReference>
<dbReference type="PIRSF" id="PIRSF027352">
    <property type="entry name" value="ER_p29"/>
    <property type="match status" value="1"/>
</dbReference>
<dbReference type="SUPFAM" id="SSF47933">
    <property type="entry name" value="ERP29 C domain-like"/>
    <property type="match status" value="1"/>
</dbReference>
<dbReference type="SUPFAM" id="SSF52833">
    <property type="entry name" value="Thioredoxin-like"/>
    <property type="match status" value="1"/>
</dbReference>
<dbReference type="PROSITE" id="PS00014">
    <property type="entry name" value="ER_TARGET"/>
    <property type="match status" value="1"/>
</dbReference>
<evidence type="ECO:0000250" key="1"/>
<evidence type="ECO:0000250" key="2">
    <source>
        <dbReference type="UniProtKB" id="P30040"/>
    </source>
</evidence>
<evidence type="ECO:0000255" key="3">
    <source>
        <dbReference type="PROSITE-ProRule" id="PRU10138"/>
    </source>
</evidence>
<name>ERP29_MOUSE</name>